<organism>
    <name type="scientific">Caenorhabditis elegans</name>
    <dbReference type="NCBI Taxonomy" id="6239"/>
    <lineage>
        <taxon>Eukaryota</taxon>
        <taxon>Metazoa</taxon>
        <taxon>Ecdysozoa</taxon>
        <taxon>Nematoda</taxon>
        <taxon>Chromadorea</taxon>
        <taxon>Rhabditida</taxon>
        <taxon>Rhabditina</taxon>
        <taxon>Rhabditomorpha</taxon>
        <taxon>Rhabditoidea</taxon>
        <taxon>Rhabditidae</taxon>
        <taxon>Peloderinae</taxon>
        <taxon>Caenorhabditis</taxon>
    </lineage>
</organism>
<proteinExistence type="inferred from homology"/>
<accession>P34535</accession>
<dbReference type="EMBL" id="FO081667">
    <property type="protein sequence ID" value="CCD73188.1"/>
    <property type="molecule type" value="Genomic_DNA"/>
</dbReference>
<dbReference type="PIR" id="S44862">
    <property type="entry name" value="S44862"/>
</dbReference>
<dbReference type="FunCoup" id="P34535">
    <property type="interactions" value="2476"/>
</dbReference>
<dbReference type="STRING" id="6239.R05D3.2.1"/>
<dbReference type="iPTMnet" id="P34535"/>
<dbReference type="PaxDb" id="6239-R05D3.2"/>
<dbReference type="EnsemblMetazoa" id="R05D3.2.1">
    <property type="protein sequence ID" value="R05D3.2.1"/>
    <property type="gene ID" value="WBGene00019877"/>
</dbReference>
<dbReference type="KEGG" id="cel:CELE_R05D3.2"/>
<dbReference type="UCSC" id="R05D3.2">
    <property type="organism name" value="c. elegans"/>
</dbReference>
<dbReference type="AGR" id="WB:WBGene00019877"/>
<dbReference type="CTD" id="176182"/>
<dbReference type="WormBase" id="R05D3.2">
    <property type="protein sequence ID" value="CE00281"/>
    <property type="gene ID" value="WBGene00019877"/>
</dbReference>
<dbReference type="eggNOG" id="KOG3722">
    <property type="taxonomic scope" value="Eukaryota"/>
</dbReference>
<dbReference type="GeneTree" id="ENSGT00390000007809"/>
<dbReference type="HOGENOM" id="CLU_029445_1_0_1"/>
<dbReference type="InParanoid" id="P34535"/>
<dbReference type="OMA" id="PLIYSCV"/>
<dbReference type="OrthoDB" id="5596951at2759"/>
<dbReference type="PhylomeDB" id="P34535"/>
<dbReference type="PRO" id="PR:P34535"/>
<dbReference type="Proteomes" id="UP000001940">
    <property type="component" value="Chromosome III"/>
</dbReference>
<dbReference type="Bgee" id="WBGene00019877">
    <property type="expression patterns" value="Expressed in germ line (C elegans) and 4 other cell types or tissues"/>
</dbReference>
<dbReference type="GO" id="GO:0005886">
    <property type="term" value="C:plasma membrane"/>
    <property type="evidence" value="ECO:0000318"/>
    <property type="project" value="GO_Central"/>
</dbReference>
<dbReference type="GO" id="GO:0004888">
    <property type="term" value="F:transmembrane signaling receptor activity"/>
    <property type="evidence" value="ECO:0000318"/>
    <property type="project" value="GO_Central"/>
</dbReference>
<dbReference type="GO" id="GO:0007165">
    <property type="term" value="P:signal transduction"/>
    <property type="evidence" value="ECO:0000318"/>
    <property type="project" value="GO_Central"/>
</dbReference>
<dbReference type="InterPro" id="IPR008075">
    <property type="entry name" value="LIMR"/>
</dbReference>
<dbReference type="InterPro" id="IPR006876">
    <property type="entry name" value="LMBR1-like_membr_prot"/>
</dbReference>
<dbReference type="PANTHER" id="PTHR12625">
    <property type="entry name" value="LIPOCALIN-1 INTERACTING MEMBRANE RECEPTOR LIMR"/>
    <property type="match status" value="1"/>
</dbReference>
<dbReference type="PANTHER" id="PTHR12625:SF0">
    <property type="entry name" value="PROTEIN LILIPOD"/>
    <property type="match status" value="1"/>
</dbReference>
<dbReference type="Pfam" id="PF04791">
    <property type="entry name" value="LMBR1"/>
    <property type="match status" value="1"/>
</dbReference>
<dbReference type="PRINTS" id="PR01692">
    <property type="entry name" value="LIPOCALINIMR"/>
</dbReference>
<feature type="chain" id="PRO_0000065416" description="LIMR family protein R05D3.2">
    <location>
        <begin position="1"/>
        <end position="737"/>
    </location>
</feature>
<feature type="region of interest" description="Disordered" evidence="1">
    <location>
        <begin position="280"/>
        <end position="416"/>
    </location>
</feature>
<feature type="compositionally biased region" description="Acidic residues" evidence="1">
    <location>
        <begin position="280"/>
        <end position="293"/>
    </location>
</feature>
<feature type="compositionally biased region" description="Basic and acidic residues" evidence="1">
    <location>
        <begin position="303"/>
        <end position="318"/>
    </location>
</feature>
<gene>
    <name type="ORF">R05D3.2</name>
</gene>
<keyword id="KW-1185">Reference proteome</keyword>
<comment type="similarity">
    <text evidence="2">Belongs to the LIMR family.</text>
</comment>
<evidence type="ECO:0000256" key="1">
    <source>
        <dbReference type="SAM" id="MobiDB-lite"/>
    </source>
</evidence>
<evidence type="ECO:0000305" key="2"/>
<name>YNC2_CAEEL</name>
<reference key="1">
    <citation type="journal article" date="1994" name="Nature">
        <title>2.2 Mb of contiguous nucleotide sequence from chromosome III of C. elegans.</title>
        <authorList>
            <person name="Wilson R."/>
            <person name="Ainscough R."/>
            <person name="Anderson K."/>
            <person name="Baynes C."/>
            <person name="Berks M."/>
            <person name="Bonfield J."/>
            <person name="Burton J."/>
            <person name="Connell M."/>
            <person name="Copsey T."/>
            <person name="Cooper J."/>
            <person name="Coulson A."/>
            <person name="Craxton M."/>
            <person name="Dear S."/>
            <person name="Du Z."/>
            <person name="Durbin R."/>
            <person name="Favello A."/>
            <person name="Fraser A."/>
            <person name="Fulton L."/>
            <person name="Gardner A."/>
            <person name="Green P."/>
            <person name="Hawkins T."/>
            <person name="Hillier L."/>
            <person name="Jier M."/>
            <person name="Johnston L."/>
            <person name="Jones M."/>
            <person name="Kershaw J."/>
            <person name="Kirsten J."/>
            <person name="Laisster N."/>
            <person name="Latreille P."/>
            <person name="Lightning J."/>
            <person name="Lloyd C."/>
            <person name="Mortimore B."/>
            <person name="O'Callaghan M."/>
            <person name="Parsons J."/>
            <person name="Percy C."/>
            <person name="Rifken L."/>
            <person name="Roopra A."/>
            <person name="Saunders D."/>
            <person name="Shownkeen R."/>
            <person name="Sims M."/>
            <person name="Smaldon N."/>
            <person name="Smith A."/>
            <person name="Smith M."/>
            <person name="Sonnhammer E."/>
            <person name="Staden R."/>
            <person name="Sulston J."/>
            <person name="Thierry-Mieg J."/>
            <person name="Thomas K."/>
            <person name="Vaudin M."/>
            <person name="Vaughan K."/>
            <person name="Waterston R."/>
            <person name="Watson A."/>
            <person name="Weinstock L."/>
            <person name="Wilkinson-Sproat J."/>
            <person name="Wohldman P."/>
        </authorList>
    </citation>
    <scope>NUCLEOTIDE SEQUENCE [LARGE SCALE GENOMIC DNA]</scope>
    <source>
        <strain>Bristol N2</strain>
    </source>
</reference>
<reference key="2">
    <citation type="journal article" date="1998" name="Science">
        <title>Genome sequence of the nematode C. elegans: a platform for investigating biology.</title>
        <authorList>
            <consortium name="The C. elegans sequencing consortium"/>
        </authorList>
    </citation>
    <scope>NUCLEOTIDE SEQUENCE [LARGE SCALE GENOMIC DNA]</scope>
    <source>
        <strain>Bristol N2</strain>
    </source>
</reference>
<protein>
    <recommendedName>
        <fullName>LIMR family protein R05D3.2</fullName>
    </recommendedName>
</protein>
<sequence>MAQYALEAGVSWLATSVSVVASGTWQFAKWTHKYVMQQAEELEADEPEESYFQQMVDKEKEFHNYVRQQIICMWLFMLLYLFAYWLISRLKRKTEREALYAGEEDYFVYRVSVWISSTATATSIGSLTLLPFSVIGVELLQLYDGNYYLQWLSYSLIGALWNYVFVLSNVSLFVLLPFSYFFIESQGFSTSKIGNDMTQRIYEAMAISFLFAFVLLCLAEVVLTILDYPVSFLSITSVNLPLIYSCVSFIGAVLLLISTPYGFAKMFSLARDFLVTEETADIEEENSEQSEDVTEPKNSSSDETIHQVDRSDTPHLEDVVNDITENVDADGEFRKDSDSGIESGSTEEMRLNTDDEEMGINDSDDKSAFGDDGDLGNSTPTKNKKKRRKHDYAATTPIVRKWDKDVPKKPKNPNFDYRNLKEYVKEARRQRSSLSESDDYWFGSPPRSSFSANYYSSRFSRWKHNSETGLNPSSSLLVDPFASGDFHEASSSEASSTPLSPARRTKSEEAIWKPVLHTVKSSKLYKRAIEKQGRLVKLFMSLRFPVAAAALLVLTTCSLIMVATNTLKLLFGYRSLPVYAQYIEVHTRHSFGLFGACIETLLIIYVMITSFVGLYSLPVLRSLRPVRKDTPMPTIIINSSIVLVVASALPVAVNTVGMTTFDLLGSHSSLQWLGSFRVVVAYNTLFVVLSVAFLFNQLTASMRRQIWKWICQLRCGIRRESDADETIEILRGDKKSN</sequence>